<organism>
    <name type="scientific">Paracoccus denitrificans (strain Pd 1222)</name>
    <dbReference type="NCBI Taxonomy" id="318586"/>
    <lineage>
        <taxon>Bacteria</taxon>
        <taxon>Pseudomonadati</taxon>
        <taxon>Pseudomonadota</taxon>
        <taxon>Alphaproteobacteria</taxon>
        <taxon>Rhodobacterales</taxon>
        <taxon>Paracoccaceae</taxon>
        <taxon>Paracoccus</taxon>
    </lineage>
</organism>
<name>BIOB2_PARDP</name>
<keyword id="KW-0001">2Fe-2S</keyword>
<keyword id="KW-0004">4Fe-4S</keyword>
<keyword id="KW-0093">Biotin biosynthesis</keyword>
<keyword id="KW-0408">Iron</keyword>
<keyword id="KW-0411">Iron-sulfur</keyword>
<keyword id="KW-0479">Metal-binding</keyword>
<keyword id="KW-1185">Reference proteome</keyword>
<keyword id="KW-0949">S-adenosyl-L-methionine</keyword>
<keyword id="KW-0808">Transferase</keyword>
<accession>A1B656</accession>
<evidence type="ECO:0000255" key="1">
    <source>
        <dbReference type="HAMAP-Rule" id="MF_01694"/>
    </source>
</evidence>
<evidence type="ECO:0000255" key="2">
    <source>
        <dbReference type="PROSITE-ProRule" id="PRU01266"/>
    </source>
</evidence>
<protein>
    <recommendedName>
        <fullName evidence="1">Biotin synthase 2</fullName>
        <ecNumber evidence="1">2.8.1.6</ecNumber>
    </recommendedName>
</protein>
<reference key="1">
    <citation type="submission" date="2006-12" db="EMBL/GenBank/DDBJ databases">
        <title>Complete sequence of chromosome 2 of Paracoccus denitrificans PD1222.</title>
        <authorList>
            <person name="Copeland A."/>
            <person name="Lucas S."/>
            <person name="Lapidus A."/>
            <person name="Barry K."/>
            <person name="Detter J.C."/>
            <person name="Glavina del Rio T."/>
            <person name="Hammon N."/>
            <person name="Israni S."/>
            <person name="Dalin E."/>
            <person name="Tice H."/>
            <person name="Pitluck S."/>
            <person name="Munk A.C."/>
            <person name="Brettin T."/>
            <person name="Bruce D."/>
            <person name="Han C."/>
            <person name="Tapia R."/>
            <person name="Gilna P."/>
            <person name="Schmutz J."/>
            <person name="Larimer F."/>
            <person name="Land M."/>
            <person name="Hauser L."/>
            <person name="Kyrpides N."/>
            <person name="Lykidis A."/>
            <person name="Spiro S."/>
            <person name="Richardson D.J."/>
            <person name="Moir J.W.B."/>
            <person name="Ferguson S.J."/>
            <person name="van Spanning R.J.M."/>
            <person name="Richardson P."/>
        </authorList>
    </citation>
    <scope>NUCLEOTIDE SEQUENCE [LARGE SCALE GENOMIC DNA]</scope>
    <source>
        <strain>Pd 1222</strain>
    </source>
</reference>
<sequence length="320" mass="34800">MPQQSRSAAEIYHQPLMDLLFQAQTVHRAHFDPNVVQCSKLLSIKTGGCPEDCAYCSQSARNGSELSASKLMEVQRVLAEARRAKEAGATRYCMGAAWRSPKERDMPAVLAMIRGVKAMGMETCMTLGMLDADQALRLKDAGLDYYNHNIDTSERYYSEIITTRTFQDRIETLERVQAAGINVCAGGIVGMGETAEDRISMLETLAGLEVPPQSVPINMLMPMAGTPLADVPRLDAIEMVRTIATARILMPASYVRLSAGRSEMSDEMQAMCFFAGANSIFVGDTLLTAGNPDEDKDALLFAKLGLRAEVPEASQEGCAA</sequence>
<feature type="chain" id="PRO_0000381516" description="Biotin synthase 2">
    <location>
        <begin position="1"/>
        <end position="320"/>
    </location>
</feature>
<feature type="domain" description="Radical SAM core" evidence="2">
    <location>
        <begin position="34"/>
        <end position="261"/>
    </location>
</feature>
<feature type="binding site" evidence="1">
    <location>
        <position position="49"/>
    </location>
    <ligand>
        <name>[4Fe-4S] cluster</name>
        <dbReference type="ChEBI" id="CHEBI:49883"/>
        <note>4Fe-4S-S-AdoMet</note>
    </ligand>
</feature>
<feature type="binding site" evidence="1">
    <location>
        <position position="53"/>
    </location>
    <ligand>
        <name>[4Fe-4S] cluster</name>
        <dbReference type="ChEBI" id="CHEBI:49883"/>
        <note>4Fe-4S-S-AdoMet</note>
    </ligand>
</feature>
<feature type="binding site" evidence="1">
    <location>
        <position position="56"/>
    </location>
    <ligand>
        <name>[4Fe-4S] cluster</name>
        <dbReference type="ChEBI" id="CHEBI:49883"/>
        <note>4Fe-4S-S-AdoMet</note>
    </ligand>
</feature>
<feature type="binding site" evidence="1">
    <location>
        <position position="93"/>
    </location>
    <ligand>
        <name>[2Fe-2S] cluster</name>
        <dbReference type="ChEBI" id="CHEBI:190135"/>
    </ligand>
</feature>
<feature type="binding site" evidence="1">
    <location>
        <position position="124"/>
    </location>
    <ligand>
        <name>[2Fe-2S] cluster</name>
        <dbReference type="ChEBI" id="CHEBI:190135"/>
    </ligand>
</feature>
<feature type="binding site" evidence="1">
    <location>
        <position position="184"/>
    </location>
    <ligand>
        <name>[2Fe-2S] cluster</name>
        <dbReference type="ChEBI" id="CHEBI:190135"/>
    </ligand>
</feature>
<feature type="binding site" evidence="1">
    <location>
        <position position="256"/>
    </location>
    <ligand>
        <name>[2Fe-2S] cluster</name>
        <dbReference type="ChEBI" id="CHEBI:190135"/>
    </ligand>
</feature>
<dbReference type="EC" id="2.8.1.6" evidence="1"/>
<dbReference type="EMBL" id="CP000490">
    <property type="protein sequence ID" value="ABL71000.1"/>
    <property type="molecule type" value="Genomic_DNA"/>
</dbReference>
<dbReference type="RefSeq" id="WP_011749190.1">
    <property type="nucleotide sequence ID" value="NC_008687.1"/>
</dbReference>
<dbReference type="SMR" id="A1B656"/>
<dbReference type="STRING" id="318586.Pden_2916"/>
<dbReference type="EnsemblBacteria" id="ABL71000">
    <property type="protein sequence ID" value="ABL71000"/>
    <property type="gene ID" value="Pden_2916"/>
</dbReference>
<dbReference type="GeneID" id="93452597"/>
<dbReference type="KEGG" id="pde:Pden_2916"/>
<dbReference type="eggNOG" id="COG0502">
    <property type="taxonomic scope" value="Bacteria"/>
</dbReference>
<dbReference type="HOGENOM" id="CLU_033172_1_2_5"/>
<dbReference type="UniPathway" id="UPA00078">
    <property type="reaction ID" value="UER00162"/>
</dbReference>
<dbReference type="Proteomes" id="UP000000361">
    <property type="component" value="Chromosome 2"/>
</dbReference>
<dbReference type="GO" id="GO:0051537">
    <property type="term" value="F:2 iron, 2 sulfur cluster binding"/>
    <property type="evidence" value="ECO:0007669"/>
    <property type="project" value="UniProtKB-KW"/>
</dbReference>
<dbReference type="GO" id="GO:0051539">
    <property type="term" value="F:4 iron, 4 sulfur cluster binding"/>
    <property type="evidence" value="ECO:0007669"/>
    <property type="project" value="UniProtKB-KW"/>
</dbReference>
<dbReference type="GO" id="GO:0004076">
    <property type="term" value="F:biotin synthase activity"/>
    <property type="evidence" value="ECO:0007669"/>
    <property type="project" value="UniProtKB-UniRule"/>
</dbReference>
<dbReference type="GO" id="GO:0005506">
    <property type="term" value="F:iron ion binding"/>
    <property type="evidence" value="ECO:0007669"/>
    <property type="project" value="UniProtKB-UniRule"/>
</dbReference>
<dbReference type="GO" id="GO:0009102">
    <property type="term" value="P:biotin biosynthetic process"/>
    <property type="evidence" value="ECO:0007669"/>
    <property type="project" value="UniProtKB-UniRule"/>
</dbReference>
<dbReference type="CDD" id="cd01335">
    <property type="entry name" value="Radical_SAM"/>
    <property type="match status" value="1"/>
</dbReference>
<dbReference type="FunFam" id="3.20.20.70:FF:000011">
    <property type="entry name" value="Biotin synthase"/>
    <property type="match status" value="1"/>
</dbReference>
<dbReference type="Gene3D" id="3.20.20.70">
    <property type="entry name" value="Aldolase class I"/>
    <property type="match status" value="1"/>
</dbReference>
<dbReference type="HAMAP" id="MF_01694">
    <property type="entry name" value="BioB"/>
    <property type="match status" value="1"/>
</dbReference>
<dbReference type="InterPro" id="IPR013785">
    <property type="entry name" value="Aldolase_TIM"/>
</dbReference>
<dbReference type="InterPro" id="IPR010722">
    <property type="entry name" value="BATS_dom"/>
</dbReference>
<dbReference type="InterPro" id="IPR002684">
    <property type="entry name" value="Biotin_synth/BioAB"/>
</dbReference>
<dbReference type="InterPro" id="IPR024177">
    <property type="entry name" value="Biotin_synthase"/>
</dbReference>
<dbReference type="InterPro" id="IPR006638">
    <property type="entry name" value="Elp3/MiaA/NifB-like_rSAM"/>
</dbReference>
<dbReference type="InterPro" id="IPR007197">
    <property type="entry name" value="rSAM"/>
</dbReference>
<dbReference type="NCBIfam" id="TIGR00433">
    <property type="entry name" value="bioB"/>
    <property type="match status" value="1"/>
</dbReference>
<dbReference type="PANTHER" id="PTHR22976">
    <property type="entry name" value="BIOTIN SYNTHASE"/>
    <property type="match status" value="1"/>
</dbReference>
<dbReference type="PANTHER" id="PTHR22976:SF2">
    <property type="entry name" value="BIOTIN SYNTHASE, MITOCHONDRIAL"/>
    <property type="match status" value="1"/>
</dbReference>
<dbReference type="Pfam" id="PF06968">
    <property type="entry name" value="BATS"/>
    <property type="match status" value="1"/>
</dbReference>
<dbReference type="Pfam" id="PF04055">
    <property type="entry name" value="Radical_SAM"/>
    <property type="match status" value="1"/>
</dbReference>
<dbReference type="PIRSF" id="PIRSF001619">
    <property type="entry name" value="Biotin_synth"/>
    <property type="match status" value="1"/>
</dbReference>
<dbReference type="SFLD" id="SFLDF00272">
    <property type="entry name" value="biotin_synthase"/>
    <property type="match status" value="1"/>
</dbReference>
<dbReference type="SFLD" id="SFLDS00029">
    <property type="entry name" value="Radical_SAM"/>
    <property type="match status" value="1"/>
</dbReference>
<dbReference type="SMART" id="SM00876">
    <property type="entry name" value="BATS"/>
    <property type="match status" value="1"/>
</dbReference>
<dbReference type="SMART" id="SM00729">
    <property type="entry name" value="Elp3"/>
    <property type="match status" value="1"/>
</dbReference>
<dbReference type="SUPFAM" id="SSF102114">
    <property type="entry name" value="Radical SAM enzymes"/>
    <property type="match status" value="1"/>
</dbReference>
<dbReference type="PROSITE" id="PS51918">
    <property type="entry name" value="RADICAL_SAM"/>
    <property type="match status" value="1"/>
</dbReference>
<proteinExistence type="inferred from homology"/>
<comment type="function">
    <text evidence="1">Catalyzes the conversion of dethiobiotin (DTB) to biotin by the insertion of a sulfur atom into dethiobiotin via a radical-based mechanism.</text>
</comment>
<comment type="catalytic activity">
    <reaction evidence="1">
        <text>(4R,5S)-dethiobiotin + (sulfur carrier)-SH + 2 reduced [2Fe-2S]-[ferredoxin] + 2 S-adenosyl-L-methionine = (sulfur carrier)-H + biotin + 2 5'-deoxyadenosine + 2 L-methionine + 2 oxidized [2Fe-2S]-[ferredoxin]</text>
        <dbReference type="Rhea" id="RHEA:22060"/>
        <dbReference type="Rhea" id="RHEA-COMP:10000"/>
        <dbReference type="Rhea" id="RHEA-COMP:10001"/>
        <dbReference type="Rhea" id="RHEA-COMP:14737"/>
        <dbReference type="Rhea" id="RHEA-COMP:14739"/>
        <dbReference type="ChEBI" id="CHEBI:17319"/>
        <dbReference type="ChEBI" id="CHEBI:29917"/>
        <dbReference type="ChEBI" id="CHEBI:33737"/>
        <dbReference type="ChEBI" id="CHEBI:33738"/>
        <dbReference type="ChEBI" id="CHEBI:57586"/>
        <dbReference type="ChEBI" id="CHEBI:57844"/>
        <dbReference type="ChEBI" id="CHEBI:59789"/>
        <dbReference type="ChEBI" id="CHEBI:64428"/>
        <dbReference type="ChEBI" id="CHEBI:149473"/>
        <dbReference type="EC" id="2.8.1.6"/>
    </reaction>
</comment>
<comment type="cofactor">
    <cofactor evidence="1">
        <name>[4Fe-4S] cluster</name>
        <dbReference type="ChEBI" id="CHEBI:49883"/>
    </cofactor>
    <text evidence="1">Binds 1 [4Fe-4S] cluster. The cluster is coordinated with 3 cysteines and an exchangeable S-adenosyl-L-methionine.</text>
</comment>
<comment type="cofactor">
    <cofactor evidence="1">
        <name>[2Fe-2S] cluster</name>
        <dbReference type="ChEBI" id="CHEBI:190135"/>
    </cofactor>
    <text evidence="1">Binds 1 [2Fe-2S] cluster. The cluster is coordinated with 3 cysteines and 1 arginine.</text>
</comment>
<comment type="pathway">
    <text evidence="1">Cofactor biosynthesis; biotin biosynthesis; biotin from 7,8-diaminononanoate: step 2/2.</text>
</comment>
<comment type="subunit">
    <text evidence="1">Homodimer.</text>
</comment>
<comment type="similarity">
    <text evidence="1">Belongs to the radical SAM superfamily. Biotin synthase family.</text>
</comment>
<gene>
    <name evidence="1" type="primary">bioB2</name>
    <name type="ordered locus">Pden_2916</name>
</gene>